<gene>
    <name evidence="1" type="primary">cpcT3</name>
    <name type="ordered locus">CYA_2568</name>
</gene>
<protein>
    <recommendedName>
        <fullName evidence="1">Chromophore lyase CpcT/CpeT 3</fullName>
        <ecNumber evidence="1">4.-.-.-</ecNumber>
    </recommendedName>
</protein>
<evidence type="ECO:0000255" key="1">
    <source>
        <dbReference type="HAMAP-Rule" id="MF_01460"/>
    </source>
</evidence>
<proteinExistence type="inferred from homology"/>
<sequence length="198" mass="22465">MSVSPQLAQLATWMAGHFNNLHQAIAEPVWFANIHVYQCPLPWSVFQGIGFYVEQLYDIYPDQPYRQRVIHLFETPDGIRIQNYALGSPEAYKCAGRDLGKLASLAAAELELLPGCAVQVEWTGSCYRGRSVPGKGCIVERKGRTTYLYSEFEIGADYFHSLDQGRDPETDQVVWGSLSGPFRFVKKQDFSCYLPRWS</sequence>
<organism>
    <name type="scientific">Synechococcus sp. (strain JA-3-3Ab)</name>
    <name type="common">Cyanobacteria bacterium Yellowstone A-Prime</name>
    <dbReference type="NCBI Taxonomy" id="321327"/>
    <lineage>
        <taxon>Bacteria</taxon>
        <taxon>Bacillati</taxon>
        <taxon>Cyanobacteriota</taxon>
        <taxon>Cyanophyceae</taxon>
        <taxon>Synechococcales</taxon>
        <taxon>Synechococcaceae</taxon>
        <taxon>Synechococcus</taxon>
    </lineage>
</organism>
<keyword id="KW-0456">Lyase</keyword>
<dbReference type="EC" id="4.-.-.-" evidence="1"/>
<dbReference type="EMBL" id="CP000239">
    <property type="protein sequence ID" value="ABD00687.1"/>
    <property type="molecule type" value="Genomic_DNA"/>
</dbReference>
<dbReference type="RefSeq" id="WP_011431360.1">
    <property type="nucleotide sequence ID" value="NC_007775.1"/>
</dbReference>
<dbReference type="SMR" id="Q2JRQ9"/>
<dbReference type="STRING" id="321327.CYA_2568"/>
<dbReference type="KEGG" id="cya:CYA_2568"/>
<dbReference type="eggNOG" id="ENOG502Z877">
    <property type="taxonomic scope" value="Bacteria"/>
</dbReference>
<dbReference type="HOGENOM" id="CLU_092589_0_0_3"/>
<dbReference type="OrthoDB" id="509174at2"/>
<dbReference type="Proteomes" id="UP000008818">
    <property type="component" value="Chromosome"/>
</dbReference>
<dbReference type="GO" id="GO:0016829">
    <property type="term" value="F:lyase activity"/>
    <property type="evidence" value="ECO:0007669"/>
    <property type="project" value="UniProtKB-KW"/>
</dbReference>
<dbReference type="CDD" id="cd16338">
    <property type="entry name" value="CpcT"/>
    <property type="match status" value="1"/>
</dbReference>
<dbReference type="Gene3D" id="2.40.128.590">
    <property type="entry name" value="CpcT/CpeT domain"/>
    <property type="match status" value="1"/>
</dbReference>
<dbReference type="HAMAP" id="MF_01460">
    <property type="entry name" value="Chrphore_lyase_CpxT"/>
    <property type="match status" value="1"/>
</dbReference>
<dbReference type="InterPro" id="IPR010404">
    <property type="entry name" value="CpcT/CpeT"/>
</dbReference>
<dbReference type="InterPro" id="IPR038672">
    <property type="entry name" value="CpcT/CpeT_sf"/>
</dbReference>
<dbReference type="PANTHER" id="PTHR35137">
    <property type="entry name" value="CHROMOPHORE LYASE CRL, CHLOROPLASTIC"/>
    <property type="match status" value="1"/>
</dbReference>
<dbReference type="PANTHER" id="PTHR35137:SF1">
    <property type="entry name" value="CHROMOPHORE LYASE CRL, CHLOROPLASTIC"/>
    <property type="match status" value="1"/>
</dbReference>
<dbReference type="Pfam" id="PF06206">
    <property type="entry name" value="CpeT"/>
    <property type="match status" value="1"/>
</dbReference>
<name>CPXT3_SYNJA</name>
<feature type="chain" id="PRO_0000403166" description="Chromophore lyase CpcT/CpeT 3">
    <location>
        <begin position="1"/>
        <end position="198"/>
    </location>
</feature>
<accession>Q2JRQ9</accession>
<comment type="function">
    <text evidence="1">Covalently attaches a chromophore to Cys residue(s) of phycobiliproteins.</text>
</comment>
<comment type="similarity">
    <text evidence="1">Belongs to the CpcT/CpeT biliprotein lyase family.</text>
</comment>
<reference key="1">
    <citation type="journal article" date="2007" name="ISME J.">
        <title>Population level functional diversity in a microbial community revealed by comparative genomic and metagenomic analyses.</title>
        <authorList>
            <person name="Bhaya D."/>
            <person name="Grossman A.R."/>
            <person name="Steunou A.-S."/>
            <person name="Khuri N."/>
            <person name="Cohan F.M."/>
            <person name="Hamamura N."/>
            <person name="Melendrez M.C."/>
            <person name="Bateson M.M."/>
            <person name="Ward D.M."/>
            <person name="Heidelberg J.F."/>
        </authorList>
    </citation>
    <scope>NUCLEOTIDE SEQUENCE [LARGE SCALE GENOMIC DNA]</scope>
    <source>
        <strain>JA-3-3Ab</strain>
    </source>
</reference>